<organism>
    <name type="scientific">Neurospora crassa (strain ATCC 24698 / 74-OR23-1A / CBS 708.71 / DSM 1257 / FGSC 987)</name>
    <dbReference type="NCBI Taxonomy" id="367110"/>
    <lineage>
        <taxon>Eukaryota</taxon>
        <taxon>Fungi</taxon>
        <taxon>Dikarya</taxon>
        <taxon>Ascomycota</taxon>
        <taxon>Pezizomycotina</taxon>
        <taxon>Sordariomycetes</taxon>
        <taxon>Sordariomycetidae</taxon>
        <taxon>Sordariales</taxon>
        <taxon>Sordariaceae</taxon>
        <taxon>Neurospora</taxon>
    </lineage>
</organism>
<gene>
    <name evidence="1" type="primary">rps-0</name>
    <name type="synonym">rap-1</name>
    <name type="ORF">B19C19.040</name>
    <name type="ORF">NCU03393</name>
</gene>
<name>RSSA_NEUCR</name>
<comment type="function">
    <text evidence="1 6">Component of the ribosome, a large ribonucleoprotein complex responsible for the synthesis of proteins in the cell. The small ribosomal subunit (SSU) binds messenger RNAs (mRNAs) and translates the encoded message by selecting cognate aminoacyl-transfer RNA (tRNA) molecules. The large subunit (LSU) contains the ribosomal catalytic site termed the peptidyl transferase center (PTC), which catalyzes the formation of peptide bonds, thereby polymerizing the amino acids delivered by tRNAs into a polypeptide chain. The nascent polypeptides leave the ribosome through a tunnel in the LSU and interact with protein factors that function in enzymatic processing, targeting, and the membrane insertion of nascent chains at the exit of the ribosomal tunnel. uS2 is required for the assembly and/or stability of the 40S ribosomal subunit. Required for the processing of the 20S rRNA-precursor to mature 18S rRNA in a late step of the maturation of 40S ribosomal subunits.</text>
</comment>
<comment type="subunit">
    <text evidence="1 3">Component of the small ribosomal subunit (SSU). Mature N.crassa ribosomes consist of a small (40S) and a large (60S) subunit. The 40S small subunit contains 1 molecule of ribosomal RNA (18S rRNA) and at least 32 different proteins. The large 60S subunit contains 3 rRNA molecules (26S, 5.8S and 5S rRNA) and at least 42 different proteins. Interacts with rps21.</text>
</comment>
<comment type="subcellular location">
    <subcellularLocation>
        <location evidence="1 3">Cytoplasm</location>
    </subcellularLocation>
</comment>
<comment type="similarity">
    <text evidence="1">Belongs to the universal ribosomal protein uS2 family.</text>
</comment>
<accession>Q01291</accession>
<accession>Q7RY13</accession>
<accession>Q8X068</accession>
<sequence length="290" mass="31501">MAPANLPSIFNATSTDIEQLLAAQCHIGSKNLGVHMQPYLWKTRADGVNILNVGKTWEKIVLAARIIAAIDNPADICVISARPYGQRAVLKFAAHTGAQAIAGRFTPGSFTNYITRSFKEPRLIIVTDPRTDAQAIKEASYVNIPVIALCDADSPTEYVDVAIPTNNKGRHAIGCVWWMLAREVLRLRGTIYNRETPWDVMVDLYFYRDPEAEAEEKVEEEKLPGVEEEGVAAIESGFPATGDWEAAPAGFPATGEWSDAAPGAAAPNWDATAPATTADWAATEAKESSW</sequence>
<keyword id="KW-0002">3D-structure</keyword>
<keyword id="KW-0963">Cytoplasm</keyword>
<keyword id="KW-1185">Reference proteome</keyword>
<keyword id="KW-0687">Ribonucleoprotein</keyword>
<keyword id="KW-0689">Ribosomal protein</keyword>
<reference key="1">
    <citation type="journal article" date="1996" name="Biochim. Biophys. Acta">
        <title>Isolation of the vma-6 gene encoding a 41 kDa subunit of the Neurospora crassa vacuolar ATPase, and an adjoining gene encoding a ribosome-associated protein.</title>
        <authorList>
            <person name="Melnik V.I."/>
            <person name="Bowman B.J."/>
        </authorList>
    </citation>
    <scope>NUCLEOTIDE SEQUENCE [GENOMIC DNA]</scope>
</reference>
<reference key="2">
    <citation type="journal article" date="2003" name="Nucleic Acids Res.">
        <title>What's in the genome of a filamentous fungus? Analysis of the Neurospora genome sequence.</title>
        <authorList>
            <person name="Mannhaupt G."/>
            <person name="Montrone C."/>
            <person name="Haase D."/>
            <person name="Mewes H.-W."/>
            <person name="Aign V."/>
            <person name="Hoheisel J.D."/>
            <person name="Fartmann B."/>
            <person name="Nyakatura G."/>
            <person name="Kempken F."/>
            <person name="Maier J."/>
            <person name="Schulte U."/>
        </authorList>
    </citation>
    <scope>NUCLEOTIDE SEQUENCE [LARGE SCALE GENOMIC DNA]</scope>
    <source>
        <strain>ATCC 24698 / 74-OR23-1A / CBS 708.71 / DSM 1257 / FGSC 987</strain>
    </source>
</reference>
<reference key="3">
    <citation type="journal article" date="2003" name="Nature">
        <title>The genome sequence of the filamentous fungus Neurospora crassa.</title>
        <authorList>
            <person name="Galagan J.E."/>
            <person name="Calvo S.E."/>
            <person name="Borkovich K.A."/>
            <person name="Selker E.U."/>
            <person name="Read N.D."/>
            <person name="Jaffe D.B."/>
            <person name="FitzHugh W."/>
            <person name="Ma L.-J."/>
            <person name="Smirnov S."/>
            <person name="Purcell S."/>
            <person name="Rehman B."/>
            <person name="Elkins T."/>
            <person name="Engels R."/>
            <person name="Wang S."/>
            <person name="Nielsen C.B."/>
            <person name="Butler J."/>
            <person name="Endrizzi M."/>
            <person name="Qui D."/>
            <person name="Ianakiev P."/>
            <person name="Bell-Pedersen D."/>
            <person name="Nelson M.A."/>
            <person name="Werner-Washburne M."/>
            <person name="Selitrennikoff C.P."/>
            <person name="Kinsey J.A."/>
            <person name="Braun E.L."/>
            <person name="Zelter A."/>
            <person name="Schulte U."/>
            <person name="Kothe G.O."/>
            <person name="Jedd G."/>
            <person name="Mewes H.-W."/>
            <person name="Staben C."/>
            <person name="Marcotte E."/>
            <person name="Greenberg D."/>
            <person name="Roy A."/>
            <person name="Foley K."/>
            <person name="Naylor J."/>
            <person name="Stange-Thomann N."/>
            <person name="Barrett R."/>
            <person name="Gnerre S."/>
            <person name="Kamal M."/>
            <person name="Kamvysselis M."/>
            <person name="Mauceli E.W."/>
            <person name="Bielke C."/>
            <person name="Rudd S."/>
            <person name="Frishman D."/>
            <person name="Krystofova S."/>
            <person name="Rasmussen C."/>
            <person name="Metzenberg R.L."/>
            <person name="Perkins D.D."/>
            <person name="Kroken S."/>
            <person name="Cogoni C."/>
            <person name="Macino G."/>
            <person name="Catcheside D.E.A."/>
            <person name="Li W."/>
            <person name="Pratt R.J."/>
            <person name="Osmani S.A."/>
            <person name="DeSouza C.P.C."/>
            <person name="Glass N.L."/>
            <person name="Orbach M.J."/>
            <person name="Berglund J.A."/>
            <person name="Voelker R."/>
            <person name="Yarden O."/>
            <person name="Plamann M."/>
            <person name="Seiler S."/>
            <person name="Dunlap J.C."/>
            <person name="Radford A."/>
            <person name="Aramayo R."/>
            <person name="Natvig D.O."/>
            <person name="Alex L.A."/>
            <person name="Mannhaupt G."/>
            <person name="Ebbole D.J."/>
            <person name="Freitag M."/>
            <person name="Paulsen I."/>
            <person name="Sachs M.S."/>
            <person name="Lander E.S."/>
            <person name="Nusbaum C."/>
            <person name="Birren B.W."/>
        </authorList>
    </citation>
    <scope>NUCLEOTIDE SEQUENCE [LARGE SCALE GENOMIC DNA]</scope>
    <source>
        <strain>ATCC 24698 / 74-OR23-1A / CBS 708.71 / DSM 1257 / FGSC 987</strain>
    </source>
</reference>
<reference evidence="7" key="4">
    <citation type="journal article" date="2021" name="Proc. Natl. Acad. Sci. U.S.A.">
        <title>Structure of the translating Neurospora ribosome arrested by cycloheximide.</title>
        <authorList>
            <person name="Shen L."/>
            <person name="Su Z."/>
            <person name="Yang K."/>
            <person name="Wu C."/>
            <person name="Becker T."/>
            <person name="Bell-Pedersen D."/>
            <person name="Zhang J."/>
            <person name="Sachs M.S."/>
        </authorList>
    </citation>
    <scope>STRUCTURE BY ELECTRON MICROSCOPY (2.70 ANGSTROMS)</scope>
</reference>
<dbReference type="EMBL" id="U36470">
    <property type="protein sequence ID" value="AAB02772.1"/>
    <property type="molecule type" value="Genomic_DNA"/>
</dbReference>
<dbReference type="EMBL" id="AL669992">
    <property type="protein sequence ID" value="CAD21142.1"/>
    <property type="molecule type" value="Genomic_DNA"/>
</dbReference>
<dbReference type="EMBL" id="CM002237">
    <property type="protein sequence ID" value="EAA27604.1"/>
    <property type="molecule type" value="Genomic_DNA"/>
</dbReference>
<dbReference type="PIR" id="T47199">
    <property type="entry name" value="T47199"/>
</dbReference>
<dbReference type="RefSeq" id="XP_956840.1">
    <property type="nucleotide sequence ID" value="XM_951747.3"/>
</dbReference>
<dbReference type="PDB" id="7R81">
    <property type="method" value="EM"/>
    <property type="resolution" value="2.70 A"/>
    <property type="chains" value="B2=1-290"/>
</dbReference>
<dbReference type="PDBsum" id="7R81"/>
<dbReference type="EMDB" id="EMD-24307"/>
<dbReference type="SMR" id="Q01291"/>
<dbReference type="FunCoup" id="Q01291">
    <property type="interactions" value="1215"/>
</dbReference>
<dbReference type="STRING" id="367110.Q01291"/>
<dbReference type="PaxDb" id="5141-EFNCRP00000002664"/>
<dbReference type="EnsemblFungi" id="EAA27604">
    <property type="protein sequence ID" value="EAA27604"/>
    <property type="gene ID" value="NCU03393"/>
</dbReference>
<dbReference type="GeneID" id="3872987"/>
<dbReference type="KEGG" id="ncr:NCU03393"/>
<dbReference type="VEuPathDB" id="FungiDB:NCU03393"/>
<dbReference type="HOGENOM" id="CLU_058171_0_1_1"/>
<dbReference type="InParanoid" id="Q01291"/>
<dbReference type="OMA" id="QCHLGAK"/>
<dbReference type="OrthoDB" id="414863at2759"/>
<dbReference type="Proteomes" id="UP000001805">
    <property type="component" value="Chromosome 6, Linkage Group II"/>
</dbReference>
<dbReference type="GO" id="GO:0022627">
    <property type="term" value="C:cytosolic small ribosomal subunit"/>
    <property type="evidence" value="ECO:0000318"/>
    <property type="project" value="GO_Central"/>
</dbReference>
<dbReference type="GO" id="GO:0003735">
    <property type="term" value="F:structural constituent of ribosome"/>
    <property type="evidence" value="ECO:0000318"/>
    <property type="project" value="GO_Central"/>
</dbReference>
<dbReference type="GO" id="GO:0002181">
    <property type="term" value="P:cytoplasmic translation"/>
    <property type="evidence" value="ECO:0000318"/>
    <property type="project" value="GO_Central"/>
</dbReference>
<dbReference type="GO" id="GO:0000028">
    <property type="term" value="P:ribosomal small subunit assembly"/>
    <property type="evidence" value="ECO:0000318"/>
    <property type="project" value="GO_Central"/>
</dbReference>
<dbReference type="FunFam" id="3.40.50.10490:FF:000010">
    <property type="entry name" value="40S ribosomal protein S0"/>
    <property type="match status" value="1"/>
</dbReference>
<dbReference type="Gene3D" id="3.40.50.10490">
    <property type="entry name" value="Glucose-6-phosphate isomerase like protein, domain 1"/>
    <property type="match status" value="1"/>
</dbReference>
<dbReference type="HAMAP" id="MF_03015">
    <property type="entry name" value="Ribosomal_S2_euk"/>
    <property type="match status" value="1"/>
</dbReference>
<dbReference type="InterPro" id="IPR001865">
    <property type="entry name" value="Ribosomal_uS2"/>
</dbReference>
<dbReference type="InterPro" id="IPR018130">
    <property type="entry name" value="Ribosomal_uS2_CS"/>
</dbReference>
<dbReference type="InterPro" id="IPR027498">
    <property type="entry name" value="Ribosomal_uS2_euk"/>
</dbReference>
<dbReference type="InterPro" id="IPR005707">
    <property type="entry name" value="Ribosomal_uS2_euk/arc"/>
</dbReference>
<dbReference type="InterPro" id="IPR023591">
    <property type="entry name" value="Ribosomal_uS2_flav_dom_sf"/>
</dbReference>
<dbReference type="NCBIfam" id="TIGR01012">
    <property type="entry name" value="uS2_euk_arch"/>
    <property type="match status" value="1"/>
</dbReference>
<dbReference type="PANTHER" id="PTHR11489">
    <property type="entry name" value="40S RIBOSOMAL PROTEIN SA"/>
    <property type="match status" value="1"/>
</dbReference>
<dbReference type="Pfam" id="PF00318">
    <property type="entry name" value="Ribosomal_S2"/>
    <property type="match status" value="2"/>
</dbReference>
<dbReference type="PRINTS" id="PR00395">
    <property type="entry name" value="RIBOSOMALS2"/>
</dbReference>
<dbReference type="SUPFAM" id="SSF52313">
    <property type="entry name" value="Ribosomal protein S2"/>
    <property type="match status" value="1"/>
</dbReference>
<dbReference type="PROSITE" id="PS00963">
    <property type="entry name" value="RIBOSOMAL_S2_2"/>
    <property type="match status" value="1"/>
</dbReference>
<feature type="chain" id="PRO_0000134366" description="Small ribosomal subunit protein uS11">
    <location>
        <begin position="1"/>
        <end position="290"/>
    </location>
</feature>
<feature type="region of interest" description="Disordered" evidence="2">
    <location>
        <begin position="243"/>
        <end position="271"/>
    </location>
</feature>
<feature type="compositionally biased region" description="Low complexity" evidence="2">
    <location>
        <begin position="257"/>
        <end position="271"/>
    </location>
</feature>
<feature type="sequence conflict" description="In Ref. 1; AAB02772." evidence="5" ref="1">
    <original>Y</original>
    <variation>I</variation>
    <location>
        <position position="84"/>
    </location>
</feature>
<feature type="sequence conflict" description="In Ref. 1; AAB02772." evidence="5" ref="1">
    <original>G</original>
    <variation>A</variation>
    <location>
        <position position="174"/>
    </location>
</feature>
<feature type="sequence conflict" description="In Ref. 1; AAB02772." evidence="5" ref="1">
    <original>KESSW</original>
    <variation>RSPAGKQL</variation>
    <location>
        <begin position="286"/>
        <end position="290"/>
    </location>
</feature>
<evidence type="ECO:0000255" key="1">
    <source>
        <dbReference type="HAMAP-Rule" id="MF_03015"/>
    </source>
</evidence>
<evidence type="ECO:0000256" key="2">
    <source>
        <dbReference type="SAM" id="MobiDB-lite"/>
    </source>
</evidence>
<evidence type="ECO:0000269" key="3">
    <source>
    </source>
</evidence>
<evidence type="ECO:0000303" key="4">
    <source>
    </source>
</evidence>
<evidence type="ECO:0000305" key="5"/>
<evidence type="ECO:0000305" key="6">
    <source>
    </source>
</evidence>
<evidence type="ECO:0007744" key="7">
    <source>
        <dbReference type="PDB" id="7R81"/>
    </source>
</evidence>
<proteinExistence type="evidence at protein level"/>
<protein>
    <recommendedName>
        <fullName evidence="1 4">Small ribosomal subunit protein uS11</fullName>
    </recommendedName>
    <alternativeName>
        <fullName>40S ribosomal protein S0</fullName>
    </alternativeName>
    <alternativeName>
        <fullName>Ribosome-associated protein 1</fullName>
    </alternativeName>
</protein>